<keyword id="KW-1185">Reference proteome</keyword>
<keyword id="KW-0687">Ribonucleoprotein</keyword>
<keyword id="KW-0689">Ribosomal protein</keyword>
<keyword id="KW-0694">RNA-binding</keyword>
<keyword id="KW-0699">rRNA-binding</keyword>
<feature type="chain" id="PRO_0000345557" description="Small ribosomal subunit protein bS18">
    <location>
        <begin position="1"/>
        <end position="91"/>
    </location>
</feature>
<evidence type="ECO:0000255" key="1">
    <source>
        <dbReference type="HAMAP-Rule" id="MF_00270"/>
    </source>
</evidence>
<evidence type="ECO:0000305" key="2"/>
<protein>
    <recommendedName>
        <fullName evidence="1">Small ribosomal subunit protein bS18</fullName>
    </recommendedName>
    <alternativeName>
        <fullName evidence="2">30S ribosomal protein S18</fullName>
    </alternativeName>
</protein>
<proteinExistence type="inferred from homology"/>
<dbReference type="EMBL" id="CP000116">
    <property type="protein sequence ID" value="AAZ98056.1"/>
    <property type="status" value="ALT_INIT"/>
    <property type="molecule type" value="Genomic_DNA"/>
</dbReference>
<dbReference type="RefSeq" id="WP_011312615.1">
    <property type="nucleotide sequence ID" value="NC_007404.1"/>
</dbReference>
<dbReference type="SMR" id="Q3SH33"/>
<dbReference type="STRING" id="292415.Tbd_2103"/>
<dbReference type="KEGG" id="tbd:Tbd_2103"/>
<dbReference type="eggNOG" id="COG0238">
    <property type="taxonomic scope" value="Bacteria"/>
</dbReference>
<dbReference type="HOGENOM" id="CLU_148710_0_3_4"/>
<dbReference type="Proteomes" id="UP000008291">
    <property type="component" value="Chromosome"/>
</dbReference>
<dbReference type="GO" id="GO:0022627">
    <property type="term" value="C:cytosolic small ribosomal subunit"/>
    <property type="evidence" value="ECO:0007669"/>
    <property type="project" value="TreeGrafter"/>
</dbReference>
<dbReference type="GO" id="GO:0070181">
    <property type="term" value="F:small ribosomal subunit rRNA binding"/>
    <property type="evidence" value="ECO:0007669"/>
    <property type="project" value="TreeGrafter"/>
</dbReference>
<dbReference type="GO" id="GO:0003735">
    <property type="term" value="F:structural constituent of ribosome"/>
    <property type="evidence" value="ECO:0007669"/>
    <property type="project" value="InterPro"/>
</dbReference>
<dbReference type="GO" id="GO:0006412">
    <property type="term" value="P:translation"/>
    <property type="evidence" value="ECO:0007669"/>
    <property type="project" value="UniProtKB-UniRule"/>
</dbReference>
<dbReference type="Gene3D" id="4.10.640.10">
    <property type="entry name" value="Ribosomal protein S18"/>
    <property type="match status" value="1"/>
</dbReference>
<dbReference type="HAMAP" id="MF_00270">
    <property type="entry name" value="Ribosomal_bS18"/>
    <property type="match status" value="1"/>
</dbReference>
<dbReference type="InterPro" id="IPR001648">
    <property type="entry name" value="Ribosomal_bS18"/>
</dbReference>
<dbReference type="InterPro" id="IPR036870">
    <property type="entry name" value="Ribosomal_bS18_sf"/>
</dbReference>
<dbReference type="NCBIfam" id="TIGR00165">
    <property type="entry name" value="S18"/>
    <property type="match status" value="1"/>
</dbReference>
<dbReference type="PANTHER" id="PTHR13479">
    <property type="entry name" value="30S RIBOSOMAL PROTEIN S18"/>
    <property type="match status" value="1"/>
</dbReference>
<dbReference type="PANTHER" id="PTHR13479:SF40">
    <property type="entry name" value="SMALL RIBOSOMAL SUBUNIT PROTEIN BS18M"/>
    <property type="match status" value="1"/>
</dbReference>
<dbReference type="Pfam" id="PF01084">
    <property type="entry name" value="Ribosomal_S18"/>
    <property type="match status" value="1"/>
</dbReference>
<dbReference type="PRINTS" id="PR00974">
    <property type="entry name" value="RIBOSOMALS18"/>
</dbReference>
<dbReference type="SUPFAM" id="SSF46911">
    <property type="entry name" value="Ribosomal protein S18"/>
    <property type="match status" value="1"/>
</dbReference>
<name>RS18_THIDA</name>
<organism>
    <name type="scientific">Thiobacillus denitrificans (strain ATCC 25259 / T1)</name>
    <dbReference type="NCBI Taxonomy" id="292415"/>
    <lineage>
        <taxon>Bacteria</taxon>
        <taxon>Pseudomonadati</taxon>
        <taxon>Pseudomonadota</taxon>
        <taxon>Betaproteobacteria</taxon>
        <taxon>Nitrosomonadales</taxon>
        <taxon>Thiobacillaceae</taxon>
        <taxon>Thiobacillus</taxon>
    </lineage>
</organism>
<accession>Q3SH33</accession>
<sequence>MGGKSGGKFAGKRRDSGNRGLFKRRKFCRFTAEKVVEVDYKDVDVLKEFIAENGRIIPARITGTKAHYQRQLGTAIKRARFLALMPYTDLH</sequence>
<comment type="function">
    <text evidence="1">Binds as a heterodimer with protein bS6 to the central domain of the 16S rRNA, where it helps stabilize the platform of the 30S subunit.</text>
</comment>
<comment type="subunit">
    <text evidence="1">Part of the 30S ribosomal subunit. Forms a tight heterodimer with protein bS6.</text>
</comment>
<comment type="similarity">
    <text evidence="1">Belongs to the bacterial ribosomal protein bS18 family.</text>
</comment>
<comment type="sequence caution" evidence="2">
    <conflict type="erroneous initiation">
        <sequence resource="EMBL-CDS" id="AAZ98056"/>
    </conflict>
</comment>
<gene>
    <name evidence="1" type="primary">rpsR</name>
    <name type="ordered locus">Tbd_2103</name>
</gene>
<reference key="1">
    <citation type="journal article" date="2006" name="J. Bacteriol.">
        <title>The genome sequence of the obligately chemolithoautotrophic, facultatively anaerobic bacterium Thiobacillus denitrificans.</title>
        <authorList>
            <person name="Beller H.R."/>
            <person name="Chain P.S."/>
            <person name="Letain T.E."/>
            <person name="Chakicherla A."/>
            <person name="Larimer F.W."/>
            <person name="Richardson P.M."/>
            <person name="Coleman M.A."/>
            <person name="Wood A.P."/>
            <person name="Kelly D.P."/>
        </authorList>
    </citation>
    <scope>NUCLEOTIDE SEQUENCE [LARGE SCALE GENOMIC DNA]</scope>
    <source>
        <strain>ATCC 25259 / T1</strain>
    </source>
</reference>